<organism>
    <name type="scientific">Debaryomyces hansenii (strain ATCC 36239 / CBS 767 / BCRC 21394 / JCM 1990 / NBRC 0083 / IGC 2968)</name>
    <name type="common">Yeast</name>
    <name type="synonym">Torulaspora hansenii</name>
    <dbReference type="NCBI Taxonomy" id="284592"/>
    <lineage>
        <taxon>Eukaryota</taxon>
        <taxon>Fungi</taxon>
        <taxon>Dikarya</taxon>
        <taxon>Ascomycota</taxon>
        <taxon>Saccharomycotina</taxon>
        <taxon>Pichiomycetes</taxon>
        <taxon>Debaryomycetaceae</taxon>
        <taxon>Debaryomyces</taxon>
    </lineage>
</organism>
<feature type="chain" id="PRO_0000364282" description="Eukaryotic translation initiation factor 3 subunit C">
    <location>
        <begin position="1"/>
        <end position="852"/>
    </location>
</feature>
<feature type="domain" description="PCI" evidence="2">
    <location>
        <begin position="597"/>
        <end position="772"/>
    </location>
</feature>
<feature type="region of interest" description="Disordered" evidence="3">
    <location>
        <begin position="1"/>
        <end position="90"/>
    </location>
</feature>
<feature type="region of interest" description="Disordered" evidence="3">
    <location>
        <begin position="798"/>
        <end position="852"/>
    </location>
</feature>
<feature type="compositionally biased region" description="Acidic residues" evidence="3">
    <location>
        <begin position="14"/>
        <end position="57"/>
    </location>
</feature>
<feature type="compositionally biased region" description="Polar residues" evidence="3">
    <location>
        <begin position="798"/>
        <end position="809"/>
    </location>
</feature>
<feature type="compositionally biased region" description="Low complexity" evidence="3">
    <location>
        <begin position="810"/>
        <end position="822"/>
    </location>
</feature>
<feature type="compositionally biased region" description="Basic and acidic residues" evidence="3">
    <location>
        <begin position="823"/>
        <end position="835"/>
    </location>
</feature>
<feature type="compositionally biased region" description="Polar residues" evidence="3">
    <location>
        <begin position="841"/>
        <end position="852"/>
    </location>
</feature>
<evidence type="ECO:0000255" key="1">
    <source>
        <dbReference type="HAMAP-Rule" id="MF_03002"/>
    </source>
</evidence>
<evidence type="ECO:0000255" key="2">
    <source>
        <dbReference type="PROSITE-ProRule" id="PRU01185"/>
    </source>
</evidence>
<evidence type="ECO:0000256" key="3">
    <source>
        <dbReference type="SAM" id="MobiDB-lite"/>
    </source>
</evidence>
<accession>Q6BJF7</accession>
<reference key="1">
    <citation type="journal article" date="2004" name="Nature">
        <title>Genome evolution in yeasts.</title>
        <authorList>
            <person name="Dujon B."/>
            <person name="Sherman D."/>
            <person name="Fischer G."/>
            <person name="Durrens P."/>
            <person name="Casaregola S."/>
            <person name="Lafontaine I."/>
            <person name="de Montigny J."/>
            <person name="Marck C."/>
            <person name="Neuveglise C."/>
            <person name="Talla E."/>
            <person name="Goffard N."/>
            <person name="Frangeul L."/>
            <person name="Aigle M."/>
            <person name="Anthouard V."/>
            <person name="Babour A."/>
            <person name="Barbe V."/>
            <person name="Barnay S."/>
            <person name="Blanchin S."/>
            <person name="Beckerich J.-M."/>
            <person name="Beyne E."/>
            <person name="Bleykasten C."/>
            <person name="Boisrame A."/>
            <person name="Boyer J."/>
            <person name="Cattolico L."/>
            <person name="Confanioleri F."/>
            <person name="de Daruvar A."/>
            <person name="Despons L."/>
            <person name="Fabre E."/>
            <person name="Fairhead C."/>
            <person name="Ferry-Dumazet H."/>
            <person name="Groppi A."/>
            <person name="Hantraye F."/>
            <person name="Hennequin C."/>
            <person name="Jauniaux N."/>
            <person name="Joyet P."/>
            <person name="Kachouri R."/>
            <person name="Kerrest A."/>
            <person name="Koszul R."/>
            <person name="Lemaire M."/>
            <person name="Lesur I."/>
            <person name="Ma L."/>
            <person name="Muller H."/>
            <person name="Nicaud J.-M."/>
            <person name="Nikolski M."/>
            <person name="Oztas S."/>
            <person name="Ozier-Kalogeropoulos O."/>
            <person name="Pellenz S."/>
            <person name="Potier S."/>
            <person name="Richard G.-F."/>
            <person name="Straub M.-L."/>
            <person name="Suleau A."/>
            <person name="Swennen D."/>
            <person name="Tekaia F."/>
            <person name="Wesolowski-Louvel M."/>
            <person name="Westhof E."/>
            <person name="Wirth B."/>
            <person name="Zeniou-Meyer M."/>
            <person name="Zivanovic Y."/>
            <person name="Bolotin-Fukuhara M."/>
            <person name="Thierry A."/>
            <person name="Bouchier C."/>
            <person name="Caudron B."/>
            <person name="Scarpelli C."/>
            <person name="Gaillardin C."/>
            <person name="Weissenbach J."/>
            <person name="Wincker P."/>
            <person name="Souciet J.-L."/>
        </authorList>
    </citation>
    <scope>NUCLEOTIDE SEQUENCE [LARGE SCALE GENOMIC DNA]</scope>
    <source>
        <strain>ATCC 36239 / CBS 767 / BCRC 21394 / JCM 1990 / NBRC 0083 / IGC 2968</strain>
    </source>
</reference>
<gene>
    <name evidence="1" type="primary">NIP1</name>
    <name type="ordered locus">DEHA2G02750g</name>
    <name type="ORF">DEHA0G03234g</name>
</gene>
<protein>
    <recommendedName>
        <fullName evidence="1">Eukaryotic translation initiation factor 3 subunit C</fullName>
        <shortName evidence="1">eIF3c</shortName>
    </recommendedName>
    <alternativeName>
        <fullName evidence="1">Eukaryotic translation initiation factor 3 93 kDa subunit homolog</fullName>
        <shortName evidence="1">eIF3 p93</shortName>
    </alternativeName>
    <alternativeName>
        <fullName evidence="1">Translation initiation factor eIF3, p93 subunit homolog</fullName>
    </alternativeName>
</protein>
<keyword id="KW-0963">Cytoplasm</keyword>
<keyword id="KW-0396">Initiation factor</keyword>
<keyword id="KW-0648">Protein biosynthesis</keyword>
<keyword id="KW-1185">Reference proteome</keyword>
<name>EIF3C_DEBHA</name>
<sequence length="852" mass="96431">MSRFFVSGYPSDSSSEEEDLLSSSEEELLSSESEEDNFSSDSEFGNDSDNDSSDSDSDGAPSGPTYFLKKDFMKGSGDGSDSDSDDEGRKVVKSAKDKLLDDMRDSIESINTAKRVGNWTNILAEFEKLGRLLIKVGQQKIGTPNFYVKCLANLEDYINETVTNEKESTKKMNATYSRAFNTVRQRVKKQIKEYQSHMDLFRTKPELFETEEPLEGIASTIAGAPQLNGDEDSNAFTSVGAKTFSPIFTTLKQISETRGKKNIDKVEQIQTLEDLLNDTSSTGTPFELISIYQMLLSIRFDASSNQSFMPIDQWKKNEADLNSFLQLLKSKSKEYQVSELGTVTDDIDIEPPANADGVKVVFGSIASLIERLDDEFTRSLQYSDPHSIEYIQRLKDESIIYKLIVKGQLYVESTTPVEIRSKHEAGQLFRIVMRRLEHIHYKPNQLIAANETEAWKNIDTNVDSTIVPRNSDPNDLVVGLADFLTQNAKSIYGKNALLCSIYYYAINNQYVKARDLFLSSHIYSTIHNSESSLQVMYNRALVQLGLSAFKAGVIEESHQALNEIANSQRLKELLGQGFNSKYPSQATTAEKQKLLPFHMHINLELLECVFMTSSLLIEIPAMAAVSSSSKDSKRKASLKSFKSKLDFHERQYFTGPPESIKDHVVHSSIALQKGDWAKAYKLLSSIKIWKLIPDNEQLLSMMKKQLQVEGLRTYIFTYKSIYTKLSIAKLSAIFDIEKESVYSIIDKMIQPGDISGSIDESKSFVNFTTNDHQRTKLQELAIVMNEKVGLLTEKNEKTASNGYSRKQPMQQQQQQQQQQQQQKEQKELLHEENNRFRYANVNANNDEFQTTA</sequence>
<comment type="function">
    <text evidence="1">Component of the eukaryotic translation initiation factor 3 (eIF-3) complex, which is involved in protein synthesis of a specialized repertoire of mRNAs and, together with other initiation factors, stimulates binding of mRNA and methionyl-tRNAi to the 40S ribosome. The eIF-3 complex specifically targets and initiates translation of a subset of mRNAs involved in cell proliferation.</text>
</comment>
<comment type="subunit">
    <text evidence="1">Component of the eukaryotic translation initiation factor 3 (eIF-3) complex.</text>
</comment>
<comment type="subcellular location">
    <subcellularLocation>
        <location evidence="1">Cytoplasm</location>
    </subcellularLocation>
</comment>
<comment type="similarity">
    <text evidence="1">Belongs to the eIF-3 subunit C family.</text>
</comment>
<proteinExistence type="inferred from homology"/>
<dbReference type="EMBL" id="CR382139">
    <property type="protein sequence ID" value="CAG90112.1"/>
    <property type="molecule type" value="Genomic_DNA"/>
</dbReference>
<dbReference type="RefSeq" id="XP_461664.1">
    <property type="nucleotide sequence ID" value="XM_461664.1"/>
</dbReference>
<dbReference type="SMR" id="Q6BJF7"/>
<dbReference type="FunCoup" id="Q6BJF7">
    <property type="interactions" value="1255"/>
</dbReference>
<dbReference type="STRING" id="284592.Q6BJF7"/>
<dbReference type="GeneID" id="2904530"/>
<dbReference type="KEGG" id="dha:DEHA2G02750g"/>
<dbReference type="VEuPathDB" id="FungiDB:DEHA2G02750g"/>
<dbReference type="eggNOG" id="KOG1076">
    <property type="taxonomic scope" value="Eukaryota"/>
</dbReference>
<dbReference type="HOGENOM" id="CLU_004304_0_2_1"/>
<dbReference type="InParanoid" id="Q6BJF7"/>
<dbReference type="OMA" id="FRCGLIK"/>
<dbReference type="OrthoDB" id="29647at2759"/>
<dbReference type="Proteomes" id="UP000000599">
    <property type="component" value="Chromosome G"/>
</dbReference>
<dbReference type="GO" id="GO:0010494">
    <property type="term" value="C:cytoplasmic stress granule"/>
    <property type="evidence" value="ECO:0007669"/>
    <property type="project" value="EnsemblFungi"/>
</dbReference>
<dbReference type="GO" id="GO:0016282">
    <property type="term" value="C:eukaryotic 43S preinitiation complex"/>
    <property type="evidence" value="ECO:0007669"/>
    <property type="project" value="UniProtKB-UniRule"/>
</dbReference>
<dbReference type="GO" id="GO:0033290">
    <property type="term" value="C:eukaryotic 48S preinitiation complex"/>
    <property type="evidence" value="ECO:0007669"/>
    <property type="project" value="UniProtKB-UniRule"/>
</dbReference>
<dbReference type="GO" id="GO:0071540">
    <property type="term" value="C:eukaryotic translation initiation factor 3 complex, eIF3e"/>
    <property type="evidence" value="ECO:0007669"/>
    <property type="project" value="EnsemblFungi"/>
</dbReference>
<dbReference type="GO" id="GO:0071541">
    <property type="term" value="C:eukaryotic translation initiation factor 3 complex, eIF3m"/>
    <property type="evidence" value="ECO:0007669"/>
    <property type="project" value="EnsemblFungi"/>
</dbReference>
<dbReference type="GO" id="GO:0043614">
    <property type="term" value="C:multi-eIF complex"/>
    <property type="evidence" value="ECO:0007669"/>
    <property type="project" value="EnsemblFungi"/>
</dbReference>
<dbReference type="GO" id="GO:0008541">
    <property type="term" value="C:proteasome regulatory particle, lid subcomplex"/>
    <property type="evidence" value="ECO:0007669"/>
    <property type="project" value="UniProtKB-ARBA"/>
</dbReference>
<dbReference type="GO" id="GO:0003723">
    <property type="term" value="F:RNA binding"/>
    <property type="evidence" value="ECO:0007669"/>
    <property type="project" value="InterPro"/>
</dbReference>
<dbReference type="GO" id="GO:0003743">
    <property type="term" value="F:translation initiation factor activity"/>
    <property type="evidence" value="ECO:0007669"/>
    <property type="project" value="UniProtKB-UniRule"/>
</dbReference>
<dbReference type="GO" id="GO:0031369">
    <property type="term" value="F:translation initiation factor binding"/>
    <property type="evidence" value="ECO:0007669"/>
    <property type="project" value="EnsemblFungi"/>
</dbReference>
<dbReference type="GO" id="GO:0001732">
    <property type="term" value="P:formation of cytoplasmic translation initiation complex"/>
    <property type="evidence" value="ECO:0007669"/>
    <property type="project" value="UniProtKB-UniRule"/>
</dbReference>
<dbReference type="Gene3D" id="1.10.10.10">
    <property type="entry name" value="Winged helix-like DNA-binding domain superfamily/Winged helix DNA-binding domain"/>
    <property type="match status" value="1"/>
</dbReference>
<dbReference type="HAMAP" id="MF_03002">
    <property type="entry name" value="eIF3c"/>
    <property type="match status" value="1"/>
</dbReference>
<dbReference type="InterPro" id="IPR027516">
    <property type="entry name" value="EIF3C"/>
</dbReference>
<dbReference type="InterPro" id="IPR008905">
    <property type="entry name" value="EIF3C_N_dom"/>
</dbReference>
<dbReference type="InterPro" id="IPR000717">
    <property type="entry name" value="PCI_dom"/>
</dbReference>
<dbReference type="InterPro" id="IPR036388">
    <property type="entry name" value="WH-like_DNA-bd_sf"/>
</dbReference>
<dbReference type="InterPro" id="IPR036390">
    <property type="entry name" value="WH_DNA-bd_sf"/>
</dbReference>
<dbReference type="PANTHER" id="PTHR13937">
    <property type="entry name" value="EUKARYOTIC TRANSLATION INITATION FACTOR 3, SUBUNIT 8 EIF3S8 -RELATED"/>
    <property type="match status" value="1"/>
</dbReference>
<dbReference type="PANTHER" id="PTHR13937:SF0">
    <property type="entry name" value="EUKARYOTIC TRANSLATION INITIATION FACTOR 3 SUBUNIT C-RELATED"/>
    <property type="match status" value="1"/>
</dbReference>
<dbReference type="Pfam" id="PF05470">
    <property type="entry name" value="eIF-3c_N"/>
    <property type="match status" value="2"/>
</dbReference>
<dbReference type="Pfam" id="PF01399">
    <property type="entry name" value="PCI"/>
    <property type="match status" value="1"/>
</dbReference>
<dbReference type="SMART" id="SM00088">
    <property type="entry name" value="PINT"/>
    <property type="match status" value="1"/>
</dbReference>
<dbReference type="SUPFAM" id="SSF46785">
    <property type="entry name" value="Winged helix' DNA-binding domain"/>
    <property type="match status" value="1"/>
</dbReference>
<dbReference type="PROSITE" id="PS50250">
    <property type="entry name" value="PCI"/>
    <property type="match status" value="1"/>
</dbReference>